<organism>
    <name type="scientific">Trichomonas vaginalis</name>
    <dbReference type="NCBI Taxonomy" id="5722"/>
    <lineage>
        <taxon>Eukaryota</taxon>
        <taxon>Metamonada</taxon>
        <taxon>Parabasalia</taxon>
        <taxon>Trichomonadida</taxon>
        <taxon>Trichomonadidae</taxon>
        <taxon>Trichomonas</taxon>
    </lineage>
</organism>
<protein>
    <recommendedName>
        <fullName>Hydrogenosomal chaperonin HSP60</fullName>
        <shortName>Protein Cpn60</shortName>
    </recommendedName>
    <alternativeName>
        <fullName>Heat shock protein 60</fullName>
    </alternativeName>
    <alternativeName>
        <fullName>groEL protein</fullName>
    </alternativeName>
</protein>
<proteinExistence type="inferred from homology"/>
<feature type="chain" id="PRO_0000063638" description="Hydrogenosomal chaperonin HSP60">
    <location>
        <begin position="1"/>
        <end position="470"/>
    </location>
</feature>
<reference key="1">
    <citation type="journal article" date="1996" name="Proc. Natl. Acad. Sci. U.S.A.">
        <title>A common evolutionary origin for mitochondria and hydrogenosomes.</title>
        <authorList>
            <person name="Bui E.T."/>
            <person name="Bradley P.J."/>
            <person name="Johnson P.J."/>
        </authorList>
    </citation>
    <scope>NUCLEOTIDE SEQUENCE [GENOMIC DNA]</scope>
</reference>
<name>CH60_TRIVA</name>
<evidence type="ECO:0000305" key="1"/>
<sequence length="470" mass="50614">MSLIEAAKHFTRAFAKARDLKFGSDARDHLLLGVEKLADAVVSTLGPKGRNVMIELPYGPPKVTKDGVTVAKSIEFKDKWQNLGAQLVINVAQKTNDVAGDGTTTATLLTRELYRESIKALSAGLDPNKVRKGMTLRVDAVVKELEKSTKKVSSPDEIFNVATISANGSEKIGHLIADAFKAVGNEGVITVAMGKKFDHELETVQGMKIDRGYISSYFQNDTKSMKCEYENPYILITDIKINSFAQIAPILEKIITTGRPLLIIADDVEGDALATLIVNKIRGSLKVVAIRAPGFGDNKKNTLQDIAVATGGQYISEELGLKLEEATQQMLGQCNKITVSKDDCIILGGAGDKDAMKARSEDIKKQLSNTQSKYETDKLRERLAKLTGGVAVISVGGANEVEVGEEKDLIDDALNATRAAIEEGIVAGGGTALLRASAVLEPLKKDKGLEERTGIEIIQNSHQTASHSHC</sequence>
<accession>Q95058</accession>
<gene>
    <name type="primary">HSP60</name>
</gene>
<keyword id="KW-0067">ATP-binding</keyword>
<keyword id="KW-0143">Chaperone</keyword>
<keyword id="KW-0377">Hydrogenosome</keyword>
<keyword id="KW-0547">Nucleotide-binding</keyword>
<comment type="function">
    <text evidence="1">Implicated in hydrogenosomal protein import and macromolecular assembly. May facilitate the correct folding of imported proteins. May also prevent misfolding and promote the refolding and proper assembly of unfolded polypeptides generated under stress conditions in the hydrogenosome (Potential).</text>
</comment>
<comment type="subcellular location">
    <subcellularLocation>
        <location>Hydrogenosome</location>
    </subcellularLocation>
</comment>
<comment type="similarity">
    <text evidence="1">Belongs to the chaperonin (HSP60) family.</text>
</comment>
<dbReference type="EMBL" id="U26966">
    <property type="protein sequence ID" value="AAB17250.1"/>
    <property type="molecule type" value="Genomic_DNA"/>
</dbReference>
<dbReference type="SMR" id="Q95058"/>
<dbReference type="VEuPathDB" id="TrichDB:TVAG_167250"/>
<dbReference type="VEuPathDB" id="TrichDB:TVAGG3_0175390"/>
<dbReference type="eggNOG" id="KOG0356">
    <property type="taxonomic scope" value="Eukaryota"/>
</dbReference>
<dbReference type="GO" id="GO:0042566">
    <property type="term" value="C:hydrogenosome"/>
    <property type="evidence" value="ECO:0007669"/>
    <property type="project" value="UniProtKB-SubCell"/>
</dbReference>
<dbReference type="GO" id="GO:0005524">
    <property type="term" value="F:ATP binding"/>
    <property type="evidence" value="ECO:0007669"/>
    <property type="project" value="UniProtKB-KW"/>
</dbReference>
<dbReference type="GO" id="GO:0140662">
    <property type="term" value="F:ATP-dependent protein folding chaperone"/>
    <property type="evidence" value="ECO:0007669"/>
    <property type="project" value="InterPro"/>
</dbReference>
<dbReference type="GO" id="GO:0042026">
    <property type="term" value="P:protein refolding"/>
    <property type="evidence" value="ECO:0007669"/>
    <property type="project" value="InterPro"/>
</dbReference>
<dbReference type="CDD" id="cd03344">
    <property type="entry name" value="GroEL"/>
    <property type="match status" value="1"/>
</dbReference>
<dbReference type="FunFam" id="3.50.7.10:FF:000001">
    <property type="entry name" value="60 kDa chaperonin"/>
    <property type="match status" value="1"/>
</dbReference>
<dbReference type="Gene3D" id="3.50.7.10">
    <property type="entry name" value="GroEL"/>
    <property type="match status" value="1"/>
</dbReference>
<dbReference type="Gene3D" id="1.10.560.10">
    <property type="entry name" value="GroEL-like equatorial domain"/>
    <property type="match status" value="1"/>
</dbReference>
<dbReference type="Gene3D" id="3.30.260.10">
    <property type="entry name" value="TCP-1-like chaperonin intermediate domain"/>
    <property type="match status" value="1"/>
</dbReference>
<dbReference type="InterPro" id="IPR018370">
    <property type="entry name" value="Chaperonin_Cpn60_CS"/>
</dbReference>
<dbReference type="InterPro" id="IPR001844">
    <property type="entry name" value="Cpn60/GroEL"/>
</dbReference>
<dbReference type="InterPro" id="IPR002423">
    <property type="entry name" value="Cpn60/GroEL/TCP-1"/>
</dbReference>
<dbReference type="InterPro" id="IPR027409">
    <property type="entry name" value="GroEL-like_apical_dom_sf"/>
</dbReference>
<dbReference type="InterPro" id="IPR027413">
    <property type="entry name" value="GROEL-like_equatorial_sf"/>
</dbReference>
<dbReference type="InterPro" id="IPR027410">
    <property type="entry name" value="TCP-1-like_intermed_sf"/>
</dbReference>
<dbReference type="NCBIfam" id="TIGR02348">
    <property type="entry name" value="GroEL"/>
    <property type="match status" value="1"/>
</dbReference>
<dbReference type="NCBIfam" id="NF000592">
    <property type="entry name" value="PRK00013.1"/>
    <property type="match status" value="1"/>
</dbReference>
<dbReference type="NCBIfam" id="NF009487">
    <property type="entry name" value="PRK12849.1"/>
    <property type="match status" value="1"/>
</dbReference>
<dbReference type="NCBIfam" id="NF009488">
    <property type="entry name" value="PRK12850.1"/>
    <property type="match status" value="1"/>
</dbReference>
<dbReference type="NCBIfam" id="NF009489">
    <property type="entry name" value="PRK12851.1"/>
    <property type="match status" value="1"/>
</dbReference>
<dbReference type="PANTHER" id="PTHR45633">
    <property type="entry name" value="60 KDA HEAT SHOCK PROTEIN, MITOCHONDRIAL"/>
    <property type="match status" value="1"/>
</dbReference>
<dbReference type="Pfam" id="PF00118">
    <property type="entry name" value="Cpn60_TCP1"/>
    <property type="match status" value="1"/>
</dbReference>
<dbReference type="PRINTS" id="PR00298">
    <property type="entry name" value="CHAPERONIN60"/>
</dbReference>
<dbReference type="SUPFAM" id="SSF52029">
    <property type="entry name" value="GroEL apical domain-like"/>
    <property type="match status" value="1"/>
</dbReference>
<dbReference type="SUPFAM" id="SSF48592">
    <property type="entry name" value="GroEL equatorial domain-like"/>
    <property type="match status" value="1"/>
</dbReference>
<dbReference type="SUPFAM" id="SSF54849">
    <property type="entry name" value="GroEL-intermediate domain like"/>
    <property type="match status" value="1"/>
</dbReference>
<dbReference type="PROSITE" id="PS00296">
    <property type="entry name" value="CHAPERONINS_CPN60"/>
    <property type="match status" value="1"/>
</dbReference>